<reference key="1">
    <citation type="journal article" date="2002" name="Nature">
        <title>The genome sequence of Schizosaccharomyces pombe.</title>
        <authorList>
            <person name="Wood V."/>
            <person name="Gwilliam R."/>
            <person name="Rajandream M.A."/>
            <person name="Lyne M.H."/>
            <person name="Lyne R."/>
            <person name="Stewart A."/>
            <person name="Sgouros J.G."/>
            <person name="Peat N."/>
            <person name="Hayles J."/>
            <person name="Baker S.G."/>
            <person name="Basham D."/>
            <person name="Bowman S."/>
            <person name="Brooks K."/>
            <person name="Brown D."/>
            <person name="Brown S."/>
            <person name="Chillingworth T."/>
            <person name="Churcher C.M."/>
            <person name="Collins M."/>
            <person name="Connor R."/>
            <person name="Cronin A."/>
            <person name="Davis P."/>
            <person name="Feltwell T."/>
            <person name="Fraser A."/>
            <person name="Gentles S."/>
            <person name="Goble A."/>
            <person name="Hamlin N."/>
            <person name="Harris D.E."/>
            <person name="Hidalgo J."/>
            <person name="Hodgson G."/>
            <person name="Holroyd S."/>
            <person name="Hornsby T."/>
            <person name="Howarth S."/>
            <person name="Huckle E.J."/>
            <person name="Hunt S."/>
            <person name="Jagels K."/>
            <person name="James K.D."/>
            <person name="Jones L."/>
            <person name="Jones M."/>
            <person name="Leather S."/>
            <person name="McDonald S."/>
            <person name="McLean J."/>
            <person name="Mooney P."/>
            <person name="Moule S."/>
            <person name="Mungall K.L."/>
            <person name="Murphy L.D."/>
            <person name="Niblett D."/>
            <person name="Odell C."/>
            <person name="Oliver K."/>
            <person name="O'Neil S."/>
            <person name="Pearson D."/>
            <person name="Quail M.A."/>
            <person name="Rabbinowitsch E."/>
            <person name="Rutherford K.M."/>
            <person name="Rutter S."/>
            <person name="Saunders D."/>
            <person name="Seeger K."/>
            <person name="Sharp S."/>
            <person name="Skelton J."/>
            <person name="Simmonds M.N."/>
            <person name="Squares R."/>
            <person name="Squares S."/>
            <person name="Stevens K."/>
            <person name="Taylor K."/>
            <person name="Taylor R.G."/>
            <person name="Tivey A."/>
            <person name="Walsh S.V."/>
            <person name="Warren T."/>
            <person name="Whitehead S."/>
            <person name="Woodward J.R."/>
            <person name="Volckaert G."/>
            <person name="Aert R."/>
            <person name="Robben J."/>
            <person name="Grymonprez B."/>
            <person name="Weltjens I."/>
            <person name="Vanstreels E."/>
            <person name="Rieger M."/>
            <person name="Schaefer M."/>
            <person name="Mueller-Auer S."/>
            <person name="Gabel C."/>
            <person name="Fuchs M."/>
            <person name="Duesterhoeft A."/>
            <person name="Fritzc C."/>
            <person name="Holzer E."/>
            <person name="Moestl D."/>
            <person name="Hilbert H."/>
            <person name="Borzym K."/>
            <person name="Langer I."/>
            <person name="Beck A."/>
            <person name="Lehrach H."/>
            <person name="Reinhardt R."/>
            <person name="Pohl T.M."/>
            <person name="Eger P."/>
            <person name="Zimmermann W."/>
            <person name="Wedler H."/>
            <person name="Wambutt R."/>
            <person name="Purnelle B."/>
            <person name="Goffeau A."/>
            <person name="Cadieu E."/>
            <person name="Dreano S."/>
            <person name="Gloux S."/>
            <person name="Lelaure V."/>
            <person name="Mottier S."/>
            <person name="Galibert F."/>
            <person name="Aves S.J."/>
            <person name="Xiang Z."/>
            <person name="Hunt C."/>
            <person name="Moore K."/>
            <person name="Hurst S.M."/>
            <person name="Lucas M."/>
            <person name="Rochet M."/>
            <person name="Gaillardin C."/>
            <person name="Tallada V.A."/>
            <person name="Garzon A."/>
            <person name="Thode G."/>
            <person name="Daga R.R."/>
            <person name="Cruzado L."/>
            <person name="Jimenez J."/>
            <person name="Sanchez M."/>
            <person name="del Rey F."/>
            <person name="Benito J."/>
            <person name="Dominguez A."/>
            <person name="Revuelta J.L."/>
            <person name="Moreno S."/>
            <person name="Armstrong J."/>
            <person name="Forsburg S.L."/>
            <person name="Cerutti L."/>
            <person name="Lowe T."/>
            <person name="McCombie W.R."/>
            <person name="Paulsen I."/>
            <person name="Potashkin J."/>
            <person name="Shpakovski G.V."/>
            <person name="Ussery D."/>
            <person name="Barrell B.G."/>
            <person name="Nurse P."/>
        </authorList>
    </citation>
    <scope>NUCLEOTIDE SEQUENCE [LARGE SCALE GENOMIC DNA]</scope>
    <source>
        <strain>972 / ATCC 24843</strain>
    </source>
</reference>
<reference key="2">
    <citation type="journal article" date="2000" name="Genes Cells">
        <title>Large-scale screening of intracellular protein localization in living fission yeast cells by the use of a GFP-fusion genomic DNA library.</title>
        <authorList>
            <person name="Ding D.-Q."/>
            <person name="Tomita Y."/>
            <person name="Yamamoto A."/>
            <person name="Chikashige Y."/>
            <person name="Haraguchi T."/>
            <person name="Hiraoka Y."/>
        </authorList>
    </citation>
    <scope>NUCLEOTIDE SEQUENCE [LARGE SCALE GENOMIC DNA] OF 211-354</scope>
    <source>
        <strain>ATCC 38364 / 968</strain>
    </source>
</reference>
<reference key="3">
    <citation type="journal article" date="2002" name="Mol. Cell. Biol.">
        <title>Proteomics analysis reveals stable multiprotein complexes in both fission and budding yeasts containing Myb-related Cdc5p/Cef1p, novel pre-mRNA splicing factors, and snRNAs.</title>
        <authorList>
            <person name="Ohi M.D."/>
            <person name="Link A.J."/>
            <person name="Ren L."/>
            <person name="Jennings J.L."/>
            <person name="McDonald W.H."/>
            <person name="Gould K.L."/>
        </authorList>
    </citation>
    <scope>IDENTIFICATION IN THE CWF COMPLEX</scope>
    <scope>IDENTIFICATION BY MASS SPECTROMETRY</scope>
</reference>
<reference key="4">
    <citation type="journal article" date="2008" name="J. Proteome Res.">
        <title>Phosphoproteome analysis of fission yeast.</title>
        <authorList>
            <person name="Wilson-Grady J.T."/>
            <person name="Villen J."/>
            <person name="Gygi S.P."/>
        </authorList>
    </citation>
    <scope>PHOSPHORYLATION [LARGE SCALE ANALYSIS] AT SER-266 AND SER-268</scope>
    <scope>IDENTIFICATION BY MASS SPECTROMETRY</scope>
</reference>
<comment type="function">
    <text>Involved in mRNA splicing.</text>
</comment>
<comment type="subunit">
    <text evidence="4">Belongs to the 40S cdc5-associated complex (or cwf complex), a spliceosome sub-complex reminiscent of a late-stage spliceosome composed of the U2, U5 and U6 snRNAs and at least brr2, cdc5, cwf2/prp3, cwf3/syf1, cwf4/syf3, cwf5/ecm2, spp42/cwf6, cwf7/spf27, cwf8, cwf9, cwf10, cwf11, cwf12, prp45/cwf13, cwf14, cwf15, cwf16, cwf17, cwf18, cwf19, cwf20, cwf21, cwf22, cwf23, cwf24, cwf25, cwf26, cyp7/cwf27, cwf28, cwf29/ist3, lea1, msl1, prp5/cwf1, prp10, prp12/sap130, prp17, prp22, sap61, sap62, sap114, sap145, slu7, smb1, smd1, smd3, smf1, smg1 and syf2.</text>
</comment>
<comment type="subcellular location">
    <subcellularLocation>
        <location evidence="1">Nucleus</location>
    </subcellularLocation>
</comment>
<comment type="similarity">
    <text evidence="6">Belongs to the CWC25 family.</text>
</comment>
<organism>
    <name type="scientific">Schizosaccharomyces pombe (strain 972 / ATCC 24843)</name>
    <name type="common">Fission yeast</name>
    <dbReference type="NCBI Taxonomy" id="284812"/>
    <lineage>
        <taxon>Eukaryota</taxon>
        <taxon>Fungi</taxon>
        <taxon>Dikarya</taxon>
        <taxon>Ascomycota</taxon>
        <taxon>Taphrinomycotina</taxon>
        <taxon>Schizosaccharomycetes</taxon>
        <taxon>Schizosaccharomycetales</taxon>
        <taxon>Schizosaccharomycetaceae</taxon>
        <taxon>Schizosaccharomyces</taxon>
    </lineage>
</organism>
<gene>
    <name type="primary">cwf25</name>
    <name type="ORF">SPBC146.05c</name>
</gene>
<accession>Q9Y805</accession>
<accession>Q9UU20</accession>
<sequence>MGGGDLNMKKSWHPLLMRNQEKVWKDEQAHKEEMKRVEQLRREIEEERQLLELHRLQEAAGGKKRKDRVEWMYAVPNTNGPNRDSSEMEEYLLGRRRLDDLLKDKIEDQNNSLEKTEFIALQNANSLQDTQAKLRLDPLLAIKQQEQKQLQTLMEKRKYSLDSDRKSKERRHRDRHHRSNQDRSRERSDNEQHSSDKREHSRRSYRNDRNNWRERTHNDRYRHRDKYDSGYFKKHYDDDMRFDQGHFQDERDLKKYVRTSRQYSRSPSPDFRTRNHQFHSRDSQPITQRHTDIESRLQKMQDNAKELDESRRKKIELLEKKERDEEQFLEKERRDTARKWDNQGDFIRNMRKEIYSGDSVSLADRVNSSRHNMLRP</sequence>
<protein>
    <recommendedName>
        <fullName>Pre-mRNA-splicing factor cwf25</fullName>
    </recommendedName>
    <alternativeName>
        <fullName>Complexed with cdc5 protein 25</fullName>
    </alternativeName>
</protein>
<name>CWC25_SCHPO</name>
<keyword id="KW-0175">Coiled coil</keyword>
<keyword id="KW-0507">mRNA processing</keyword>
<keyword id="KW-0508">mRNA splicing</keyword>
<keyword id="KW-0539">Nucleus</keyword>
<keyword id="KW-0597">Phosphoprotein</keyword>
<keyword id="KW-1185">Reference proteome</keyword>
<keyword id="KW-0747">Spliceosome</keyword>
<feature type="chain" id="PRO_0000079593" description="Pre-mRNA-splicing factor cwf25">
    <location>
        <begin position="1"/>
        <end position="376"/>
    </location>
</feature>
<feature type="region of interest" description="Disordered" evidence="3">
    <location>
        <begin position="153"/>
        <end position="211"/>
    </location>
</feature>
<feature type="region of interest" description="Disordered" evidence="3">
    <location>
        <begin position="258"/>
        <end position="289"/>
    </location>
</feature>
<feature type="coiled-coil region" evidence="2">
    <location>
        <begin position="25"/>
        <end position="60"/>
    </location>
</feature>
<feature type="coiled-coil region" evidence="2">
    <location>
        <begin position="286"/>
        <end position="334"/>
    </location>
</feature>
<feature type="compositionally biased region" description="Basic and acidic residues" evidence="3">
    <location>
        <begin position="154"/>
        <end position="167"/>
    </location>
</feature>
<feature type="compositionally biased region" description="Basic residues" evidence="3">
    <location>
        <begin position="168"/>
        <end position="178"/>
    </location>
</feature>
<feature type="compositionally biased region" description="Basic and acidic residues" evidence="3">
    <location>
        <begin position="179"/>
        <end position="199"/>
    </location>
</feature>
<feature type="modified residue" description="Phosphoserine" evidence="5">
    <location>
        <position position="266"/>
    </location>
</feature>
<feature type="modified residue" description="Phosphoserine" evidence="5">
    <location>
        <position position="268"/>
    </location>
</feature>
<feature type="sequence conflict" description="In Ref. 2; BAA87168." evidence="6" ref="2">
    <original>NW</original>
    <variation>FG</variation>
    <location>
        <begin position="211"/>
        <end position="212"/>
    </location>
</feature>
<feature type="sequence conflict" description="In Ref. 2; BAA87168." evidence="6" ref="2">
    <original>S</original>
    <variation>T</variation>
    <location>
        <position position="295"/>
    </location>
</feature>
<proteinExistence type="evidence at protein level"/>
<dbReference type="EMBL" id="CU329671">
    <property type="protein sequence ID" value="CAB46758.1"/>
    <property type="molecule type" value="Genomic_DNA"/>
</dbReference>
<dbReference type="EMBL" id="AB027864">
    <property type="protein sequence ID" value="BAA87168.1"/>
    <property type="molecule type" value="Genomic_DNA"/>
</dbReference>
<dbReference type="PIR" id="T39419">
    <property type="entry name" value="T39419"/>
</dbReference>
<dbReference type="RefSeq" id="NP_595394.1">
    <property type="nucleotide sequence ID" value="NM_001021301.2"/>
</dbReference>
<dbReference type="SMR" id="Q9Y805"/>
<dbReference type="BioGRID" id="276238">
    <property type="interactions" value="11"/>
</dbReference>
<dbReference type="FunCoup" id="Q9Y805">
    <property type="interactions" value="306"/>
</dbReference>
<dbReference type="IntAct" id="Q9Y805">
    <property type="interactions" value="6"/>
</dbReference>
<dbReference type="STRING" id="284812.Q9Y805"/>
<dbReference type="iPTMnet" id="Q9Y805"/>
<dbReference type="PaxDb" id="4896-SPBC146.05c.1"/>
<dbReference type="EnsemblFungi" id="SPBC146.05c.1">
    <property type="protein sequence ID" value="SPBC146.05c.1:pep"/>
    <property type="gene ID" value="SPBC146.05c"/>
</dbReference>
<dbReference type="GeneID" id="2539683"/>
<dbReference type="KEGG" id="spo:2539683"/>
<dbReference type="PomBase" id="SPBC146.05c">
    <property type="gene designation" value="cwf25"/>
</dbReference>
<dbReference type="VEuPathDB" id="FungiDB:SPBC146.05c"/>
<dbReference type="eggNOG" id="KOG3869">
    <property type="taxonomic scope" value="Eukaryota"/>
</dbReference>
<dbReference type="HOGENOM" id="CLU_025093_0_0_1"/>
<dbReference type="InParanoid" id="Q9Y805"/>
<dbReference type="OMA" id="DRVHKSH"/>
<dbReference type="PhylomeDB" id="Q9Y805"/>
<dbReference type="Reactome" id="R-SPO-72163">
    <property type="pathway name" value="mRNA Splicing - Major Pathway"/>
</dbReference>
<dbReference type="PRO" id="PR:Q9Y805"/>
<dbReference type="Proteomes" id="UP000002485">
    <property type="component" value="Chromosome II"/>
</dbReference>
<dbReference type="GO" id="GO:0005737">
    <property type="term" value="C:cytoplasm"/>
    <property type="evidence" value="ECO:0007005"/>
    <property type="project" value="PomBase"/>
</dbReference>
<dbReference type="GO" id="GO:0000974">
    <property type="term" value="C:Prp19 complex"/>
    <property type="evidence" value="ECO:0000314"/>
    <property type="project" value="PomBase"/>
</dbReference>
<dbReference type="GO" id="GO:0005684">
    <property type="term" value="C:U2-type spliceosomal complex"/>
    <property type="evidence" value="ECO:0000314"/>
    <property type="project" value="PomBase"/>
</dbReference>
<dbReference type="GO" id="GO:0045292">
    <property type="term" value="P:mRNA cis splicing, via spliceosome"/>
    <property type="evidence" value="ECO:0000269"/>
    <property type="project" value="PomBase"/>
</dbReference>
<dbReference type="GO" id="GO:0000398">
    <property type="term" value="P:mRNA splicing, via spliceosome"/>
    <property type="evidence" value="ECO:0000318"/>
    <property type="project" value="GO_Central"/>
</dbReference>
<dbReference type="InterPro" id="IPR019339">
    <property type="entry name" value="CIR_N_dom"/>
</dbReference>
<dbReference type="InterPro" id="IPR022209">
    <property type="entry name" value="CWC25"/>
</dbReference>
<dbReference type="InterPro" id="IPR051376">
    <property type="entry name" value="CWC25_splicing_factor"/>
</dbReference>
<dbReference type="PANTHER" id="PTHR16196">
    <property type="entry name" value="CELL CYCLE CONTROL PROTEIN CWF25"/>
    <property type="match status" value="1"/>
</dbReference>
<dbReference type="PANTHER" id="PTHR16196:SF0">
    <property type="entry name" value="PRE-MRNA-SPLICING FACTOR CWC25 HOMOLOG"/>
    <property type="match status" value="1"/>
</dbReference>
<dbReference type="Pfam" id="PF10197">
    <property type="entry name" value="Cir_N"/>
    <property type="match status" value="1"/>
</dbReference>
<dbReference type="Pfam" id="PF12542">
    <property type="entry name" value="CWC25"/>
    <property type="match status" value="1"/>
</dbReference>
<dbReference type="SMART" id="SM01083">
    <property type="entry name" value="Cir_N"/>
    <property type="match status" value="1"/>
</dbReference>
<evidence type="ECO:0000250" key="1"/>
<evidence type="ECO:0000255" key="2"/>
<evidence type="ECO:0000256" key="3">
    <source>
        <dbReference type="SAM" id="MobiDB-lite"/>
    </source>
</evidence>
<evidence type="ECO:0000269" key="4">
    <source>
    </source>
</evidence>
<evidence type="ECO:0000269" key="5">
    <source>
    </source>
</evidence>
<evidence type="ECO:0000305" key="6"/>